<sequence length="325" mass="36782">MSETTSWQPSASVANLLKRASIVAAVRRFFTDRGVLEVETPAMSQATVTDVFLYPFQTRFVGPGAADGMTLYLMTSPEYHMKRLLAAGSGPIFQLCRSFRNEESGRHHNPEFTMLEWYRPHYDMYRLMNEVDDLLQQVLDCESAEMLSYQQAFLRHLEIDPLSVDKAQLREAAEKLGLGDIACREDDRDSLVQMLFTFGVEPNIGRDKPAFVYHFPATQASLAEISSEDHRVAERFEVYFKGIELANGFRELTDADEQRQRFEQDNRKRAARGLSQQPIDENLLAALKNGLPECSGVALGVDRLIMLALKAEKLSDVIAFSVERA</sequence>
<name>EPMA_PECAS</name>
<keyword id="KW-0067">ATP-binding</keyword>
<keyword id="KW-0436">Ligase</keyword>
<keyword id="KW-0547">Nucleotide-binding</keyword>
<keyword id="KW-1185">Reference proteome</keyword>
<protein>
    <recommendedName>
        <fullName evidence="1">Elongation factor P--(R)-beta-lysine ligase</fullName>
        <shortName evidence="1">EF-P--(R)-beta-lysine ligase</shortName>
        <ecNumber evidence="1">6.3.2.-</ecNumber>
    </recommendedName>
    <alternativeName>
        <fullName evidence="1">EF-P post-translational modification enzyme A</fullName>
    </alternativeName>
    <alternativeName>
        <fullName evidence="1">EF-P-lysine lysyltransferase</fullName>
    </alternativeName>
</protein>
<dbReference type="EC" id="6.3.2.-" evidence="1"/>
<dbReference type="EMBL" id="BX950851">
    <property type="protein sequence ID" value="CAG76865.1"/>
    <property type="molecule type" value="Genomic_DNA"/>
</dbReference>
<dbReference type="RefSeq" id="WP_011095462.1">
    <property type="nucleotide sequence ID" value="NC_004547.2"/>
</dbReference>
<dbReference type="SMR" id="Q6D033"/>
<dbReference type="STRING" id="218491.ECA3968"/>
<dbReference type="GeneID" id="57210581"/>
<dbReference type="KEGG" id="eca:ECA3968"/>
<dbReference type="PATRIC" id="fig|218491.5.peg.4032"/>
<dbReference type="eggNOG" id="COG2269">
    <property type="taxonomic scope" value="Bacteria"/>
</dbReference>
<dbReference type="HOGENOM" id="CLU_008255_1_1_6"/>
<dbReference type="OrthoDB" id="9802326at2"/>
<dbReference type="Proteomes" id="UP000007966">
    <property type="component" value="Chromosome"/>
</dbReference>
<dbReference type="GO" id="GO:0005829">
    <property type="term" value="C:cytosol"/>
    <property type="evidence" value="ECO:0007669"/>
    <property type="project" value="TreeGrafter"/>
</dbReference>
<dbReference type="GO" id="GO:0016880">
    <property type="term" value="F:acid-ammonia (or amide) ligase activity"/>
    <property type="evidence" value="ECO:0007669"/>
    <property type="project" value="UniProtKB-UniRule"/>
</dbReference>
<dbReference type="GO" id="GO:0005524">
    <property type="term" value="F:ATP binding"/>
    <property type="evidence" value="ECO:0007669"/>
    <property type="project" value="UniProtKB-UniRule"/>
</dbReference>
<dbReference type="GO" id="GO:0004824">
    <property type="term" value="F:lysine-tRNA ligase activity"/>
    <property type="evidence" value="ECO:0007669"/>
    <property type="project" value="InterPro"/>
</dbReference>
<dbReference type="GO" id="GO:0000049">
    <property type="term" value="F:tRNA binding"/>
    <property type="evidence" value="ECO:0007669"/>
    <property type="project" value="TreeGrafter"/>
</dbReference>
<dbReference type="GO" id="GO:0006430">
    <property type="term" value="P:lysyl-tRNA aminoacylation"/>
    <property type="evidence" value="ECO:0007669"/>
    <property type="project" value="InterPro"/>
</dbReference>
<dbReference type="FunFam" id="3.30.930.10:FF:000017">
    <property type="entry name" value="Elongation factor P--(R)-beta-lysine ligase"/>
    <property type="match status" value="1"/>
</dbReference>
<dbReference type="Gene3D" id="3.30.930.10">
    <property type="entry name" value="Bira Bifunctional Protein, Domain 2"/>
    <property type="match status" value="1"/>
</dbReference>
<dbReference type="HAMAP" id="MF_00174">
    <property type="entry name" value="EF_P_modif_A"/>
    <property type="match status" value="1"/>
</dbReference>
<dbReference type="InterPro" id="IPR004364">
    <property type="entry name" value="Aa-tRNA-synt_II"/>
</dbReference>
<dbReference type="InterPro" id="IPR006195">
    <property type="entry name" value="aa-tRNA-synth_II"/>
</dbReference>
<dbReference type="InterPro" id="IPR045864">
    <property type="entry name" value="aa-tRNA-synth_II/BPL/LPL"/>
</dbReference>
<dbReference type="InterPro" id="IPR004525">
    <property type="entry name" value="EpmA"/>
</dbReference>
<dbReference type="InterPro" id="IPR018149">
    <property type="entry name" value="Lys-tRNA-synth_II_C"/>
</dbReference>
<dbReference type="NCBIfam" id="TIGR00462">
    <property type="entry name" value="genX"/>
    <property type="match status" value="1"/>
</dbReference>
<dbReference type="NCBIfam" id="NF006828">
    <property type="entry name" value="PRK09350.1"/>
    <property type="match status" value="1"/>
</dbReference>
<dbReference type="PANTHER" id="PTHR42918:SF6">
    <property type="entry name" value="ELONGATION FACTOR P--(R)-BETA-LYSINE LIGASE"/>
    <property type="match status" value="1"/>
</dbReference>
<dbReference type="PANTHER" id="PTHR42918">
    <property type="entry name" value="LYSYL-TRNA SYNTHETASE"/>
    <property type="match status" value="1"/>
</dbReference>
<dbReference type="Pfam" id="PF00152">
    <property type="entry name" value="tRNA-synt_2"/>
    <property type="match status" value="1"/>
</dbReference>
<dbReference type="PRINTS" id="PR00982">
    <property type="entry name" value="TRNASYNTHLYS"/>
</dbReference>
<dbReference type="SUPFAM" id="SSF55681">
    <property type="entry name" value="Class II aaRS and biotin synthetases"/>
    <property type="match status" value="1"/>
</dbReference>
<dbReference type="PROSITE" id="PS50862">
    <property type="entry name" value="AA_TRNA_LIGASE_II"/>
    <property type="match status" value="1"/>
</dbReference>
<reference key="1">
    <citation type="journal article" date="2004" name="Proc. Natl. Acad. Sci. U.S.A.">
        <title>Genome sequence of the enterobacterial phytopathogen Erwinia carotovora subsp. atroseptica and characterization of virulence factors.</title>
        <authorList>
            <person name="Bell K.S."/>
            <person name="Sebaihia M."/>
            <person name="Pritchard L."/>
            <person name="Holden M.T.G."/>
            <person name="Hyman L.J."/>
            <person name="Holeva M.C."/>
            <person name="Thomson N.R."/>
            <person name="Bentley S.D."/>
            <person name="Churcher L.J.C."/>
            <person name="Mungall K."/>
            <person name="Atkin R."/>
            <person name="Bason N."/>
            <person name="Brooks K."/>
            <person name="Chillingworth T."/>
            <person name="Clark K."/>
            <person name="Doggett J."/>
            <person name="Fraser A."/>
            <person name="Hance Z."/>
            <person name="Hauser H."/>
            <person name="Jagels K."/>
            <person name="Moule S."/>
            <person name="Norbertczak H."/>
            <person name="Ormond D."/>
            <person name="Price C."/>
            <person name="Quail M.A."/>
            <person name="Sanders M."/>
            <person name="Walker D."/>
            <person name="Whitehead S."/>
            <person name="Salmond G.P.C."/>
            <person name="Birch P.R.J."/>
            <person name="Parkhill J."/>
            <person name="Toth I.K."/>
        </authorList>
    </citation>
    <scope>NUCLEOTIDE SEQUENCE [LARGE SCALE GENOMIC DNA]</scope>
    <source>
        <strain>SCRI 1043 / ATCC BAA-672</strain>
    </source>
</reference>
<feature type="chain" id="PRO_1000023622" description="Elongation factor P--(R)-beta-lysine ligase">
    <location>
        <begin position="1"/>
        <end position="325"/>
    </location>
</feature>
<feature type="binding site" evidence="1">
    <location>
        <begin position="76"/>
        <end position="78"/>
    </location>
    <ligand>
        <name>substrate</name>
    </ligand>
</feature>
<feature type="binding site" evidence="1">
    <location>
        <begin position="100"/>
        <end position="102"/>
    </location>
    <ligand>
        <name>ATP</name>
        <dbReference type="ChEBI" id="CHEBI:30616"/>
    </ligand>
</feature>
<feature type="binding site" evidence="1">
    <location>
        <position position="109"/>
    </location>
    <ligand>
        <name>ATP</name>
        <dbReference type="ChEBI" id="CHEBI:30616"/>
    </ligand>
</feature>
<feature type="binding site" evidence="1">
    <location>
        <position position="118"/>
    </location>
    <ligand>
        <name>substrate</name>
    </ligand>
</feature>
<feature type="binding site" evidence="1">
    <location>
        <begin position="244"/>
        <end position="245"/>
    </location>
    <ligand>
        <name>ATP</name>
        <dbReference type="ChEBI" id="CHEBI:30616"/>
    </ligand>
</feature>
<feature type="binding site" evidence="1">
    <location>
        <position position="251"/>
    </location>
    <ligand>
        <name>substrate</name>
    </ligand>
</feature>
<feature type="binding site" evidence="1">
    <location>
        <position position="300"/>
    </location>
    <ligand>
        <name>ATP</name>
        <dbReference type="ChEBI" id="CHEBI:30616"/>
    </ligand>
</feature>
<accession>Q6D033</accession>
<evidence type="ECO:0000255" key="1">
    <source>
        <dbReference type="HAMAP-Rule" id="MF_00174"/>
    </source>
</evidence>
<gene>
    <name evidence="1" type="primary">epmA</name>
    <name type="synonym">yjeA</name>
    <name type="ordered locus">ECA3968</name>
</gene>
<proteinExistence type="inferred from homology"/>
<organism>
    <name type="scientific">Pectobacterium atrosepticum (strain SCRI 1043 / ATCC BAA-672)</name>
    <name type="common">Erwinia carotovora subsp. atroseptica</name>
    <dbReference type="NCBI Taxonomy" id="218491"/>
    <lineage>
        <taxon>Bacteria</taxon>
        <taxon>Pseudomonadati</taxon>
        <taxon>Pseudomonadota</taxon>
        <taxon>Gammaproteobacteria</taxon>
        <taxon>Enterobacterales</taxon>
        <taxon>Pectobacteriaceae</taxon>
        <taxon>Pectobacterium</taxon>
    </lineage>
</organism>
<comment type="function">
    <text evidence="1">With EpmB is involved in the beta-lysylation step of the post-translational modification of translation elongation factor P (EF-P). Catalyzes the ATP-dependent activation of (R)-beta-lysine produced by EpmB, forming a lysyl-adenylate, from which the beta-lysyl moiety is then transferred to the epsilon-amino group of a conserved specific lysine residue in EF-P.</text>
</comment>
<comment type="catalytic activity">
    <reaction evidence="1">
        <text>D-beta-lysine + L-lysyl-[protein] + ATP = N(6)-((3R)-3,6-diaminohexanoyl)-L-lysyl-[protein] + AMP + diphosphate + H(+)</text>
        <dbReference type="Rhea" id="RHEA:83435"/>
        <dbReference type="Rhea" id="RHEA-COMP:9752"/>
        <dbReference type="Rhea" id="RHEA-COMP:20131"/>
        <dbReference type="ChEBI" id="CHEBI:15378"/>
        <dbReference type="ChEBI" id="CHEBI:29969"/>
        <dbReference type="ChEBI" id="CHEBI:30616"/>
        <dbReference type="ChEBI" id="CHEBI:33019"/>
        <dbReference type="ChEBI" id="CHEBI:84138"/>
        <dbReference type="ChEBI" id="CHEBI:156053"/>
        <dbReference type="ChEBI" id="CHEBI:456215"/>
    </reaction>
    <physiologicalReaction direction="left-to-right" evidence="1">
        <dbReference type="Rhea" id="RHEA:83436"/>
    </physiologicalReaction>
</comment>
<comment type="subunit">
    <text evidence="1">Homodimer.</text>
</comment>
<comment type="similarity">
    <text evidence="1">Belongs to the class-II aminoacyl-tRNA synthetase family. EpmA subfamily.</text>
</comment>